<feature type="chain" id="PRO_0000270575" description="Leucine-rich repeat-containing protein SOG2">
    <location>
        <begin position="1"/>
        <end position="791"/>
    </location>
</feature>
<feature type="repeat" description="LRR 1">
    <location>
        <begin position="43"/>
        <end position="64"/>
    </location>
</feature>
<feature type="repeat" description="LRR 2">
    <location>
        <begin position="67"/>
        <end position="88"/>
    </location>
</feature>
<feature type="repeat" description="LRR 3">
    <location>
        <begin position="90"/>
        <end position="111"/>
    </location>
</feature>
<feature type="repeat" description="LRR 4">
    <location>
        <begin position="113"/>
        <end position="134"/>
    </location>
</feature>
<feature type="repeat" description="LRR 5">
    <location>
        <begin position="138"/>
        <end position="159"/>
    </location>
</feature>
<feature type="repeat" description="LRR 6">
    <location>
        <begin position="163"/>
        <end position="183"/>
    </location>
</feature>
<feature type="region of interest" description="Disordered" evidence="1">
    <location>
        <begin position="1"/>
        <end position="28"/>
    </location>
</feature>
<feature type="region of interest" description="Disordered" evidence="1">
    <location>
        <begin position="454"/>
        <end position="506"/>
    </location>
</feature>
<feature type="region of interest" description="Disordered" evidence="1">
    <location>
        <begin position="534"/>
        <end position="569"/>
    </location>
</feature>
<feature type="compositionally biased region" description="Basic and acidic residues" evidence="1">
    <location>
        <begin position="8"/>
        <end position="19"/>
    </location>
</feature>
<feature type="compositionally biased region" description="Low complexity" evidence="1">
    <location>
        <begin position="469"/>
        <end position="486"/>
    </location>
</feature>
<feature type="compositionally biased region" description="Polar residues" evidence="1">
    <location>
        <begin position="544"/>
        <end position="569"/>
    </location>
</feature>
<feature type="modified residue" description="Phosphothreonine" evidence="7">
    <location>
        <position position="214"/>
    </location>
</feature>
<accession>Q08817</accession>
<accession>D6W348</accession>
<protein>
    <recommendedName>
        <fullName>Leucine-rich repeat-containing protein SOG2</fullName>
    </recommendedName>
</protein>
<sequence length="791" mass="87326">MVATSSKRTLDPKEEHLPADKTSTNSSNTIISELATQEKSSSSGTTLKLIALNIKSISDEDVGYIQNVERLSLRKNHLTSLPASFKRLSRLQYLDLHNNNFKEIPYILTQCPQLEILDLSSNEIEALPDEISSFWQDNIRVLSLKDNNVTSIRNLKSITKLNKLSILDLEDNKIPKEELDQVQSYTPFHTGIPKEEYWAIAISRYLKDHPNLPTPEPKISRAAKRMGFINTNLSNGAMNENNIISLAPSANTTISASTAMVSSNQTSATSFSGTVNAESEQSGAVNGTELYNHTKYNDYFKRLSILPEESMSNGHQKISHAELVVSCRKLLFSFTECQQAIRKIASFCKEKAVAVNVVSLLYSVRSHTDNLVEVLQQTENEDESHDQALIKLCLTIITNFKQIITLLRKNFEIFFKEDDLCFIRMFYMTLMCAYMEMYNAWSFIKEDDQVSGSASKAPKKHSFSRHETSSSSITSGGGPAASTTSTHCSGNIKLLPKTRSTRTPSASALLSNSNILTGDTTAVPLLSPNLNGAHTHGPILGHQNAISNGSSQTNMNEVKTTSDTIPRQQLLQHNKSISDSKKESQAHEPKQHPVMTSSIINASNSNNVSNVNITPPPMNGGGAANSSANVVETNIDIQLYQTLSTVVKMVSVVYNQLTSEISKIAIASTMGKQILTDSLAPKIRDLTETCRQAMDLSKQLNERLNVLIPNDSNSEKYLTSLEKLKTWEIMNSFLKVIISILANTKIVMSDVPNLNELRPNLANLAKITKDVTVILDLSSYKAVSVSANSPE</sequence>
<organism>
    <name type="scientific">Saccharomyces cerevisiae (strain ATCC 204508 / S288c)</name>
    <name type="common">Baker's yeast</name>
    <dbReference type="NCBI Taxonomy" id="559292"/>
    <lineage>
        <taxon>Eukaryota</taxon>
        <taxon>Fungi</taxon>
        <taxon>Dikarya</taxon>
        <taxon>Ascomycota</taxon>
        <taxon>Saccharomycotina</taxon>
        <taxon>Saccharomycetes</taxon>
        <taxon>Saccharomycetales</taxon>
        <taxon>Saccharomycetaceae</taxon>
        <taxon>Saccharomyces</taxon>
    </lineage>
</organism>
<name>SOG2_YEAST</name>
<evidence type="ECO:0000256" key="1">
    <source>
        <dbReference type="SAM" id="MobiDB-lite"/>
    </source>
</evidence>
<evidence type="ECO:0000269" key="2">
    <source>
    </source>
</evidence>
<evidence type="ECO:0000269" key="3">
    <source>
    </source>
</evidence>
<evidence type="ECO:0000269" key="4">
    <source>
    </source>
</evidence>
<evidence type="ECO:0000312" key="5">
    <source>
        <dbReference type="EMBL" id="CAA99682.1"/>
    </source>
</evidence>
<evidence type="ECO:0000312" key="6">
    <source>
        <dbReference type="SGD" id="S000005880"/>
    </source>
</evidence>
<evidence type="ECO:0007744" key="7">
    <source>
    </source>
</evidence>
<comment type="function">
    <text evidence="2">Required for proper cell morphogenesis and cell separation after mitosis. Functions in the RAM (regulation of ACE2 activity and cellular morphogenesis) signaling network and is required for proper ACE2 localization and CBK1 kinase activity.</text>
</comment>
<comment type="interaction">
    <interactant intactId="EBI-30849">
        <id>Q08817</id>
    </interactant>
    <interactant intactId="EBI-8859">
        <id>P32464</id>
        <label>HYM1</label>
    </interactant>
    <organismsDiffer>false</organismsDiffer>
    <experiments>3</experiments>
</comment>
<comment type="interaction">
    <interactant intactId="EBI-30849">
        <id>Q08817</id>
    </interactant>
    <interactant intactId="EBI-12253">
        <id>P38692</id>
        <label>KIC1</label>
    </interactant>
    <organismsDiffer>false</organismsDiffer>
    <experiments>6</experiments>
</comment>
<comment type="subcellular location">
    <subcellularLocation>
        <location evidence="2 3">Cytoplasm</location>
    </subcellularLocation>
    <text>Localizes to cortical sites of growth during both budding and mating pheromone response. Localized prominently to incipient bud sites and small buds and weakly to the cortex and bud necks of large budded cells. Also localized to the growing tips of mating projections.</text>
</comment>
<comment type="miscellaneous">
    <text evidence="4">Present with 892 molecules/cell in log phase SD medium.</text>
</comment>
<keyword id="KW-0131">Cell cycle</keyword>
<keyword id="KW-0132">Cell division</keyword>
<keyword id="KW-0963">Cytoplasm</keyword>
<keyword id="KW-0433">Leucine-rich repeat</keyword>
<keyword id="KW-0597">Phosphoprotein</keyword>
<keyword id="KW-1185">Reference proteome</keyword>
<keyword id="KW-0677">Repeat</keyword>
<proteinExistence type="evidence at protein level"/>
<gene>
    <name evidence="6" type="primary">SOG2</name>
    <name type="ordered locus">YOR353C</name>
</gene>
<reference evidence="5" key="1">
    <citation type="journal article" date="1997" name="Nature">
        <title>The nucleotide sequence of Saccharomyces cerevisiae chromosome XV.</title>
        <authorList>
            <person name="Dujon B."/>
            <person name="Albermann K."/>
            <person name="Aldea M."/>
            <person name="Alexandraki D."/>
            <person name="Ansorge W."/>
            <person name="Arino J."/>
            <person name="Benes V."/>
            <person name="Bohn C."/>
            <person name="Bolotin-Fukuhara M."/>
            <person name="Bordonne R."/>
            <person name="Boyer J."/>
            <person name="Camasses A."/>
            <person name="Casamayor A."/>
            <person name="Casas C."/>
            <person name="Cheret G."/>
            <person name="Cziepluch C."/>
            <person name="Daignan-Fornier B."/>
            <person name="Dang V.-D."/>
            <person name="de Haan M."/>
            <person name="Delius H."/>
            <person name="Durand P."/>
            <person name="Fairhead C."/>
            <person name="Feldmann H."/>
            <person name="Gaillon L."/>
            <person name="Galisson F."/>
            <person name="Gamo F.-J."/>
            <person name="Gancedo C."/>
            <person name="Goffeau A."/>
            <person name="Goulding S.E."/>
            <person name="Grivell L.A."/>
            <person name="Habbig B."/>
            <person name="Hand N.J."/>
            <person name="Hani J."/>
            <person name="Hattenhorst U."/>
            <person name="Hebling U."/>
            <person name="Hernando Y."/>
            <person name="Herrero E."/>
            <person name="Heumann K."/>
            <person name="Hiesel R."/>
            <person name="Hilger F."/>
            <person name="Hofmann B."/>
            <person name="Hollenberg C.P."/>
            <person name="Hughes B."/>
            <person name="Jauniaux J.-C."/>
            <person name="Kalogeropoulos A."/>
            <person name="Katsoulou C."/>
            <person name="Kordes E."/>
            <person name="Lafuente M.J."/>
            <person name="Landt O."/>
            <person name="Louis E.J."/>
            <person name="Maarse A.C."/>
            <person name="Madania A."/>
            <person name="Mannhaupt G."/>
            <person name="Marck C."/>
            <person name="Martin R.P."/>
            <person name="Mewes H.-W."/>
            <person name="Michaux G."/>
            <person name="Paces V."/>
            <person name="Parle-McDermott A.G."/>
            <person name="Pearson B.M."/>
            <person name="Perrin A."/>
            <person name="Pettersson B."/>
            <person name="Poch O."/>
            <person name="Pohl T.M."/>
            <person name="Poirey R."/>
            <person name="Portetelle D."/>
            <person name="Pujol A."/>
            <person name="Purnelle B."/>
            <person name="Ramezani Rad M."/>
            <person name="Rechmann S."/>
            <person name="Schwager C."/>
            <person name="Schweizer M."/>
            <person name="Sor F."/>
            <person name="Sterky F."/>
            <person name="Tarassov I.A."/>
            <person name="Teodoru C."/>
            <person name="Tettelin H."/>
            <person name="Thierry A."/>
            <person name="Tobiasch E."/>
            <person name="Tzermia M."/>
            <person name="Uhlen M."/>
            <person name="Unseld M."/>
            <person name="Valens M."/>
            <person name="Vandenbol M."/>
            <person name="Vetter I."/>
            <person name="Vlcek C."/>
            <person name="Voet M."/>
            <person name="Volckaert G."/>
            <person name="Voss H."/>
            <person name="Wambutt R."/>
            <person name="Wedler H."/>
            <person name="Wiemann S."/>
            <person name="Winsor B."/>
            <person name="Wolfe K.H."/>
            <person name="Zollner A."/>
            <person name="Zumstein E."/>
            <person name="Kleine K."/>
        </authorList>
    </citation>
    <scope>NUCLEOTIDE SEQUENCE [LARGE SCALE GENOMIC DNA]</scope>
    <source>
        <strain>ATCC 204508 / S288c</strain>
    </source>
</reference>
<reference key="2">
    <citation type="journal article" date="2014" name="G3 (Bethesda)">
        <title>The reference genome sequence of Saccharomyces cerevisiae: Then and now.</title>
        <authorList>
            <person name="Engel S.R."/>
            <person name="Dietrich F.S."/>
            <person name="Fisk D.G."/>
            <person name="Binkley G."/>
            <person name="Balakrishnan R."/>
            <person name="Costanzo M.C."/>
            <person name="Dwight S.S."/>
            <person name="Hitz B.C."/>
            <person name="Karra K."/>
            <person name="Nash R.S."/>
            <person name="Weng S."/>
            <person name="Wong E.D."/>
            <person name="Lloyd P."/>
            <person name="Skrzypek M.S."/>
            <person name="Miyasato S.R."/>
            <person name="Simison M."/>
            <person name="Cherry J.M."/>
        </authorList>
    </citation>
    <scope>GENOME REANNOTATION</scope>
    <source>
        <strain>ATCC 204508 / S288c</strain>
    </source>
</reference>
<reference evidence="2" key="3">
    <citation type="journal article" date="2003" name="Mol. Biol. Cell">
        <title>RAM: a conserved signaling network that regulates Ace2p transcriptional activity and polarized morphogenesis.</title>
        <authorList>
            <person name="Nelson B."/>
            <person name="Kurischko C."/>
            <person name="Horecka J."/>
            <person name="Mody M."/>
            <person name="Nair P."/>
            <person name="Pratt L."/>
            <person name="Zougman A."/>
            <person name="McBroom L.D.B."/>
            <person name="Hughes T.R."/>
            <person name="Boone C."/>
            <person name="Luca F.C."/>
        </authorList>
    </citation>
    <scope>FUNCTION</scope>
    <scope>SUBCELLULAR LOCATION</scope>
</reference>
<reference evidence="2" key="4">
    <citation type="journal article" date="2003" name="Nature">
        <title>Global analysis of protein localization in budding yeast.</title>
        <authorList>
            <person name="Huh W.-K."/>
            <person name="Falvo J.V."/>
            <person name="Gerke L.C."/>
            <person name="Carroll A.S."/>
            <person name="Howson R.W."/>
            <person name="Weissman J.S."/>
            <person name="O'Shea E.K."/>
        </authorList>
    </citation>
    <scope>SUBCELLULAR LOCATION [LARGE SCALE ANALYSIS]</scope>
</reference>
<reference evidence="2" key="5">
    <citation type="journal article" date="2003" name="Nature">
        <title>Global analysis of protein expression in yeast.</title>
        <authorList>
            <person name="Ghaemmaghami S."/>
            <person name="Huh W.-K."/>
            <person name="Bower K."/>
            <person name="Howson R.W."/>
            <person name="Belle A."/>
            <person name="Dephoure N."/>
            <person name="O'Shea E.K."/>
            <person name="Weissman J.S."/>
        </authorList>
    </citation>
    <scope>LEVEL OF PROTEIN EXPRESSION [LARGE SCALE ANALYSIS]</scope>
</reference>
<reference key="6">
    <citation type="journal article" date="2008" name="Mol. Cell. Proteomics">
        <title>A multidimensional chromatography technology for in-depth phosphoproteome analysis.</title>
        <authorList>
            <person name="Albuquerque C.P."/>
            <person name="Smolka M.B."/>
            <person name="Payne S.H."/>
            <person name="Bafna V."/>
            <person name="Eng J."/>
            <person name="Zhou H."/>
        </authorList>
    </citation>
    <scope>PHOSPHORYLATION [LARGE SCALE ANALYSIS] AT THR-214</scope>
    <scope>IDENTIFICATION BY MASS SPECTROMETRY [LARGE SCALE ANALYSIS]</scope>
</reference>
<dbReference type="EMBL" id="Z75261">
    <property type="protein sequence ID" value="CAA99682.1"/>
    <property type="molecule type" value="Genomic_DNA"/>
</dbReference>
<dbReference type="EMBL" id="BK006948">
    <property type="protein sequence ID" value="DAA11114.1"/>
    <property type="molecule type" value="Genomic_DNA"/>
</dbReference>
<dbReference type="PIR" id="S67265">
    <property type="entry name" value="S67265"/>
</dbReference>
<dbReference type="RefSeq" id="NP_014998.3">
    <property type="nucleotide sequence ID" value="NM_001183773.3"/>
</dbReference>
<dbReference type="SMR" id="Q08817"/>
<dbReference type="BioGRID" id="34738">
    <property type="interactions" value="308"/>
</dbReference>
<dbReference type="DIP" id="DIP-1998N"/>
<dbReference type="FunCoup" id="Q08817">
    <property type="interactions" value="79"/>
</dbReference>
<dbReference type="IntAct" id="Q08817">
    <property type="interactions" value="41"/>
</dbReference>
<dbReference type="MINT" id="Q08817"/>
<dbReference type="STRING" id="4932.YOR353C"/>
<dbReference type="GlyGen" id="Q08817">
    <property type="glycosylation" value="4 sites, 1 O-linked glycan (3 sites)"/>
</dbReference>
<dbReference type="iPTMnet" id="Q08817"/>
<dbReference type="PaxDb" id="4932-YOR353C"/>
<dbReference type="PeptideAtlas" id="Q08817"/>
<dbReference type="EnsemblFungi" id="YOR353C_mRNA">
    <property type="protein sequence ID" value="YOR353C"/>
    <property type="gene ID" value="YOR353C"/>
</dbReference>
<dbReference type="GeneID" id="854535"/>
<dbReference type="KEGG" id="sce:YOR353C"/>
<dbReference type="AGR" id="SGD:S000005880"/>
<dbReference type="SGD" id="S000005880">
    <property type="gene designation" value="SOG2"/>
</dbReference>
<dbReference type="VEuPathDB" id="FungiDB:YOR353C"/>
<dbReference type="eggNOG" id="KOG0619">
    <property type="taxonomic scope" value="Eukaryota"/>
</dbReference>
<dbReference type="HOGENOM" id="CLU_335290_0_0_1"/>
<dbReference type="InParanoid" id="Q08817"/>
<dbReference type="OMA" id="YNDYFKR"/>
<dbReference type="OrthoDB" id="1394818at2759"/>
<dbReference type="BioCyc" id="YEAST:G3O-33824-MONOMER"/>
<dbReference type="BioGRID-ORCS" id="854535">
    <property type="hits" value="2 hits in 10 CRISPR screens"/>
</dbReference>
<dbReference type="PRO" id="PR:Q08817"/>
<dbReference type="Proteomes" id="UP000002311">
    <property type="component" value="Chromosome XV"/>
</dbReference>
<dbReference type="RNAct" id="Q08817">
    <property type="molecule type" value="protein"/>
</dbReference>
<dbReference type="GO" id="GO:0005933">
    <property type="term" value="C:cellular bud"/>
    <property type="evidence" value="ECO:0000314"/>
    <property type="project" value="SGD"/>
</dbReference>
<dbReference type="GO" id="GO:0005737">
    <property type="term" value="C:cytoplasm"/>
    <property type="evidence" value="ECO:0007005"/>
    <property type="project" value="SGD"/>
</dbReference>
<dbReference type="GO" id="GO:0000131">
    <property type="term" value="C:incipient cellular bud site"/>
    <property type="evidence" value="ECO:0000314"/>
    <property type="project" value="SGD"/>
</dbReference>
<dbReference type="GO" id="GO:0043332">
    <property type="term" value="C:mating projection tip"/>
    <property type="evidence" value="ECO:0000314"/>
    <property type="project" value="SGD"/>
</dbReference>
<dbReference type="GO" id="GO:0007118">
    <property type="term" value="P:budding cell apical bud growth"/>
    <property type="evidence" value="ECO:0000315"/>
    <property type="project" value="SGD"/>
</dbReference>
<dbReference type="GO" id="GO:0000920">
    <property type="term" value="P:septum digestion after cytokinesis"/>
    <property type="evidence" value="ECO:0000315"/>
    <property type="project" value="SGD"/>
</dbReference>
<dbReference type="GO" id="GO:0007165">
    <property type="term" value="P:signal transduction"/>
    <property type="evidence" value="ECO:0000315"/>
    <property type="project" value="SGD"/>
</dbReference>
<dbReference type="Gene3D" id="3.80.10.10">
    <property type="entry name" value="Ribonuclease Inhibitor"/>
    <property type="match status" value="1"/>
</dbReference>
<dbReference type="InterPro" id="IPR001611">
    <property type="entry name" value="Leu-rich_rpt"/>
</dbReference>
<dbReference type="InterPro" id="IPR025875">
    <property type="entry name" value="Leu-rich_rpt_4"/>
</dbReference>
<dbReference type="InterPro" id="IPR003591">
    <property type="entry name" value="Leu-rich_rpt_typical-subtyp"/>
</dbReference>
<dbReference type="InterPro" id="IPR032675">
    <property type="entry name" value="LRR_dom_sf"/>
</dbReference>
<dbReference type="InterPro" id="IPR019487">
    <property type="entry name" value="RAM_signalling_pathway_SOG2"/>
</dbReference>
<dbReference type="InterPro" id="IPR050836">
    <property type="entry name" value="SDS22/Internalin_LRR"/>
</dbReference>
<dbReference type="PANTHER" id="PTHR46652">
    <property type="entry name" value="LEUCINE-RICH REPEAT AND IQ DOMAIN-CONTAINING PROTEIN 1-RELATED"/>
    <property type="match status" value="1"/>
</dbReference>
<dbReference type="PANTHER" id="PTHR46652:SF3">
    <property type="entry name" value="LEUCINE-RICH REPEAT-CONTAINING PROTEIN 9"/>
    <property type="match status" value="1"/>
</dbReference>
<dbReference type="Pfam" id="PF12799">
    <property type="entry name" value="LRR_4"/>
    <property type="match status" value="1"/>
</dbReference>
<dbReference type="Pfam" id="PF10428">
    <property type="entry name" value="SOG2"/>
    <property type="match status" value="1"/>
</dbReference>
<dbReference type="SMART" id="SM00369">
    <property type="entry name" value="LRR_TYP"/>
    <property type="match status" value="3"/>
</dbReference>
<dbReference type="SUPFAM" id="SSF52058">
    <property type="entry name" value="L domain-like"/>
    <property type="match status" value="1"/>
</dbReference>
<dbReference type="PROSITE" id="PS51450">
    <property type="entry name" value="LRR"/>
    <property type="match status" value="5"/>
</dbReference>